<comment type="function">
    <text evidence="1">Specifically methylates position 2 of adenine 2503 in 23S rRNA and position 2 of adenine 37 in tRNAs.</text>
</comment>
<comment type="catalytic activity">
    <reaction evidence="1">
        <text>adenosine(2503) in 23S rRNA + 2 reduced [2Fe-2S]-[ferredoxin] + 2 S-adenosyl-L-methionine = 2-methyladenosine(2503) in 23S rRNA + 5'-deoxyadenosine + L-methionine + 2 oxidized [2Fe-2S]-[ferredoxin] + S-adenosyl-L-homocysteine</text>
        <dbReference type="Rhea" id="RHEA:42916"/>
        <dbReference type="Rhea" id="RHEA-COMP:10000"/>
        <dbReference type="Rhea" id="RHEA-COMP:10001"/>
        <dbReference type="Rhea" id="RHEA-COMP:10152"/>
        <dbReference type="Rhea" id="RHEA-COMP:10282"/>
        <dbReference type="ChEBI" id="CHEBI:17319"/>
        <dbReference type="ChEBI" id="CHEBI:33737"/>
        <dbReference type="ChEBI" id="CHEBI:33738"/>
        <dbReference type="ChEBI" id="CHEBI:57844"/>
        <dbReference type="ChEBI" id="CHEBI:57856"/>
        <dbReference type="ChEBI" id="CHEBI:59789"/>
        <dbReference type="ChEBI" id="CHEBI:74411"/>
        <dbReference type="ChEBI" id="CHEBI:74497"/>
        <dbReference type="EC" id="2.1.1.192"/>
    </reaction>
</comment>
<comment type="catalytic activity">
    <reaction evidence="1">
        <text>adenosine(37) in tRNA + 2 reduced [2Fe-2S]-[ferredoxin] + 2 S-adenosyl-L-methionine = 2-methyladenosine(37) in tRNA + 5'-deoxyadenosine + L-methionine + 2 oxidized [2Fe-2S]-[ferredoxin] + S-adenosyl-L-homocysteine</text>
        <dbReference type="Rhea" id="RHEA:43332"/>
        <dbReference type="Rhea" id="RHEA-COMP:10000"/>
        <dbReference type="Rhea" id="RHEA-COMP:10001"/>
        <dbReference type="Rhea" id="RHEA-COMP:10162"/>
        <dbReference type="Rhea" id="RHEA-COMP:10485"/>
        <dbReference type="ChEBI" id="CHEBI:17319"/>
        <dbReference type="ChEBI" id="CHEBI:33737"/>
        <dbReference type="ChEBI" id="CHEBI:33738"/>
        <dbReference type="ChEBI" id="CHEBI:57844"/>
        <dbReference type="ChEBI" id="CHEBI:57856"/>
        <dbReference type="ChEBI" id="CHEBI:59789"/>
        <dbReference type="ChEBI" id="CHEBI:74411"/>
        <dbReference type="ChEBI" id="CHEBI:74497"/>
        <dbReference type="EC" id="2.1.1.192"/>
    </reaction>
</comment>
<comment type="cofactor">
    <cofactor evidence="1">
        <name>[4Fe-4S] cluster</name>
        <dbReference type="ChEBI" id="CHEBI:49883"/>
    </cofactor>
    <text evidence="1">Binds 1 [4Fe-4S] cluster. The cluster is coordinated with 3 cysteines and an exchangeable S-adenosyl-L-methionine.</text>
</comment>
<comment type="subcellular location">
    <subcellularLocation>
        <location evidence="1">Cytoplasm</location>
    </subcellularLocation>
</comment>
<comment type="miscellaneous">
    <text evidence="1">Reaction proceeds by a ping-pong mechanism involving intermediate methylation of a conserved cysteine residue.</text>
</comment>
<comment type="similarity">
    <text evidence="1">Belongs to the radical SAM superfamily. RlmN family.</text>
</comment>
<reference key="1">
    <citation type="submission" date="2004-11" db="EMBL/GenBank/DDBJ databases">
        <title>Complete genome sequence of Thermus thermophilus HB8.</title>
        <authorList>
            <person name="Masui R."/>
            <person name="Kurokawa K."/>
            <person name="Nakagawa N."/>
            <person name="Tokunaga F."/>
            <person name="Koyama Y."/>
            <person name="Shibata T."/>
            <person name="Oshima T."/>
            <person name="Yokoyama S."/>
            <person name="Yasunaga T."/>
            <person name="Kuramitsu S."/>
        </authorList>
    </citation>
    <scope>NUCLEOTIDE SEQUENCE [LARGE SCALE GENOMIC DNA]</scope>
    <source>
        <strain>ATCC 27634 / DSM 579 / HB8</strain>
    </source>
</reference>
<evidence type="ECO:0000255" key="1">
    <source>
        <dbReference type="HAMAP-Rule" id="MF_01849"/>
    </source>
</evidence>
<evidence type="ECO:0000255" key="2">
    <source>
        <dbReference type="PROSITE-ProRule" id="PRU01266"/>
    </source>
</evidence>
<dbReference type="EC" id="2.1.1.192" evidence="1"/>
<dbReference type="EMBL" id="AP008226">
    <property type="protein sequence ID" value="BAD71760.1"/>
    <property type="molecule type" value="Genomic_DNA"/>
</dbReference>
<dbReference type="RefSeq" id="WP_011229030.1">
    <property type="nucleotide sequence ID" value="NC_006461.1"/>
</dbReference>
<dbReference type="RefSeq" id="YP_145203.1">
    <property type="nucleotide sequence ID" value="NC_006461.1"/>
</dbReference>
<dbReference type="SMR" id="Q5SGZ3"/>
<dbReference type="EnsemblBacteria" id="BAD71760">
    <property type="protein sequence ID" value="BAD71760"/>
    <property type="gene ID" value="BAD71760"/>
</dbReference>
<dbReference type="GeneID" id="3167938"/>
<dbReference type="KEGG" id="ttj:TTHA1937"/>
<dbReference type="PATRIC" id="fig|300852.9.peg.1908"/>
<dbReference type="eggNOG" id="COG0820">
    <property type="taxonomic scope" value="Bacteria"/>
</dbReference>
<dbReference type="HOGENOM" id="CLU_029101_0_2_0"/>
<dbReference type="PhylomeDB" id="Q5SGZ3"/>
<dbReference type="BRENDA" id="2.1.1.192">
    <property type="organism ID" value="2305"/>
</dbReference>
<dbReference type="Proteomes" id="UP000000532">
    <property type="component" value="Chromosome"/>
</dbReference>
<dbReference type="GO" id="GO:0005737">
    <property type="term" value="C:cytoplasm"/>
    <property type="evidence" value="ECO:0007669"/>
    <property type="project" value="UniProtKB-SubCell"/>
</dbReference>
<dbReference type="GO" id="GO:0051539">
    <property type="term" value="F:4 iron, 4 sulfur cluster binding"/>
    <property type="evidence" value="ECO:0007669"/>
    <property type="project" value="UniProtKB-UniRule"/>
</dbReference>
<dbReference type="GO" id="GO:0046872">
    <property type="term" value="F:metal ion binding"/>
    <property type="evidence" value="ECO:0007669"/>
    <property type="project" value="UniProtKB-KW"/>
</dbReference>
<dbReference type="GO" id="GO:0070040">
    <property type="term" value="F:rRNA (adenine(2503)-C2-)-methyltransferase activity"/>
    <property type="evidence" value="ECO:0007669"/>
    <property type="project" value="UniProtKB-UniRule"/>
</dbReference>
<dbReference type="GO" id="GO:0019843">
    <property type="term" value="F:rRNA binding"/>
    <property type="evidence" value="ECO:0007669"/>
    <property type="project" value="UniProtKB-UniRule"/>
</dbReference>
<dbReference type="GO" id="GO:0002935">
    <property type="term" value="F:tRNA (adenine(37)-C2)-methyltransferase activity"/>
    <property type="evidence" value="ECO:0007669"/>
    <property type="project" value="UniProtKB-UniRule"/>
</dbReference>
<dbReference type="GO" id="GO:0000049">
    <property type="term" value="F:tRNA binding"/>
    <property type="evidence" value="ECO:0007669"/>
    <property type="project" value="UniProtKB-UniRule"/>
</dbReference>
<dbReference type="GO" id="GO:0070475">
    <property type="term" value="P:rRNA base methylation"/>
    <property type="evidence" value="ECO:0007669"/>
    <property type="project" value="UniProtKB-UniRule"/>
</dbReference>
<dbReference type="GO" id="GO:0030488">
    <property type="term" value="P:tRNA methylation"/>
    <property type="evidence" value="ECO:0007669"/>
    <property type="project" value="UniProtKB-UniRule"/>
</dbReference>
<dbReference type="CDD" id="cd01335">
    <property type="entry name" value="Radical_SAM"/>
    <property type="match status" value="1"/>
</dbReference>
<dbReference type="FunFam" id="3.20.20.70:FF:000014">
    <property type="entry name" value="Probable dual-specificity RNA methyltransferase RlmN"/>
    <property type="match status" value="1"/>
</dbReference>
<dbReference type="Gene3D" id="1.10.150.530">
    <property type="match status" value="1"/>
</dbReference>
<dbReference type="Gene3D" id="3.20.20.70">
    <property type="entry name" value="Aldolase class I"/>
    <property type="match status" value="1"/>
</dbReference>
<dbReference type="HAMAP" id="MF_01849">
    <property type="entry name" value="RNA_methyltr_RlmN"/>
    <property type="match status" value="1"/>
</dbReference>
<dbReference type="InterPro" id="IPR013785">
    <property type="entry name" value="Aldolase_TIM"/>
</dbReference>
<dbReference type="InterPro" id="IPR040072">
    <property type="entry name" value="Methyltransferase_A"/>
</dbReference>
<dbReference type="InterPro" id="IPR048641">
    <property type="entry name" value="RlmN_N"/>
</dbReference>
<dbReference type="InterPro" id="IPR027492">
    <property type="entry name" value="RNA_MTrfase_RlmN"/>
</dbReference>
<dbReference type="InterPro" id="IPR004383">
    <property type="entry name" value="rRNA_lsu_MTrfase_RlmN/Cfr"/>
</dbReference>
<dbReference type="InterPro" id="IPR007197">
    <property type="entry name" value="rSAM"/>
</dbReference>
<dbReference type="NCBIfam" id="TIGR00048">
    <property type="entry name" value="rRNA_mod_RlmN"/>
    <property type="match status" value="1"/>
</dbReference>
<dbReference type="PANTHER" id="PTHR30544">
    <property type="entry name" value="23S RRNA METHYLTRANSFERASE"/>
    <property type="match status" value="1"/>
</dbReference>
<dbReference type="PANTHER" id="PTHR30544:SF5">
    <property type="entry name" value="RADICAL SAM CORE DOMAIN-CONTAINING PROTEIN"/>
    <property type="match status" value="1"/>
</dbReference>
<dbReference type="Pfam" id="PF04055">
    <property type="entry name" value="Radical_SAM"/>
    <property type="match status" value="1"/>
</dbReference>
<dbReference type="Pfam" id="PF21016">
    <property type="entry name" value="RlmN_N"/>
    <property type="match status" value="1"/>
</dbReference>
<dbReference type="PIRSF" id="PIRSF006004">
    <property type="entry name" value="CHP00048"/>
    <property type="match status" value="1"/>
</dbReference>
<dbReference type="SFLD" id="SFLDF00275">
    <property type="entry name" value="adenosine_C2_methyltransferase"/>
    <property type="match status" value="1"/>
</dbReference>
<dbReference type="SFLD" id="SFLDG01062">
    <property type="entry name" value="methyltransferase_(Class_A)"/>
    <property type="match status" value="1"/>
</dbReference>
<dbReference type="SUPFAM" id="SSF102114">
    <property type="entry name" value="Radical SAM enzymes"/>
    <property type="match status" value="1"/>
</dbReference>
<dbReference type="PROSITE" id="PS51918">
    <property type="entry name" value="RADICAL_SAM"/>
    <property type="match status" value="1"/>
</dbReference>
<organism>
    <name type="scientific">Thermus thermophilus (strain ATCC 27634 / DSM 579 / HB8)</name>
    <dbReference type="NCBI Taxonomy" id="300852"/>
    <lineage>
        <taxon>Bacteria</taxon>
        <taxon>Thermotogati</taxon>
        <taxon>Deinococcota</taxon>
        <taxon>Deinococci</taxon>
        <taxon>Thermales</taxon>
        <taxon>Thermaceae</taxon>
        <taxon>Thermus</taxon>
    </lineage>
</organism>
<name>RLMN_THET8</name>
<keyword id="KW-0004">4Fe-4S</keyword>
<keyword id="KW-0963">Cytoplasm</keyword>
<keyword id="KW-1015">Disulfide bond</keyword>
<keyword id="KW-0408">Iron</keyword>
<keyword id="KW-0411">Iron-sulfur</keyword>
<keyword id="KW-0479">Metal-binding</keyword>
<keyword id="KW-0489">Methyltransferase</keyword>
<keyword id="KW-1185">Reference proteome</keyword>
<keyword id="KW-0698">rRNA processing</keyword>
<keyword id="KW-0949">S-adenosyl-L-methionine</keyword>
<keyword id="KW-0808">Transferase</keyword>
<keyword id="KW-0819">tRNA processing</keyword>
<feature type="chain" id="PRO_0000350504" description="Probable dual-specificity RNA methyltransferase RlmN">
    <location>
        <begin position="1"/>
        <end position="355"/>
    </location>
</feature>
<feature type="domain" description="Radical SAM core" evidence="2">
    <location>
        <begin position="95"/>
        <end position="322"/>
    </location>
</feature>
<feature type="active site" description="Proton acceptor" evidence="1">
    <location>
        <position position="89"/>
    </location>
</feature>
<feature type="active site" description="S-methylcysteine intermediate" evidence="1">
    <location>
        <position position="333"/>
    </location>
</feature>
<feature type="binding site" evidence="1">
    <location>
        <position position="109"/>
    </location>
    <ligand>
        <name>[4Fe-4S] cluster</name>
        <dbReference type="ChEBI" id="CHEBI:49883"/>
        <note>4Fe-4S-S-AdoMet</note>
    </ligand>
</feature>
<feature type="binding site" evidence="1">
    <location>
        <position position="113"/>
    </location>
    <ligand>
        <name>[4Fe-4S] cluster</name>
        <dbReference type="ChEBI" id="CHEBI:49883"/>
        <note>4Fe-4S-S-AdoMet</note>
    </ligand>
</feature>
<feature type="binding site" evidence="1">
    <location>
        <position position="116"/>
    </location>
    <ligand>
        <name>[4Fe-4S] cluster</name>
        <dbReference type="ChEBI" id="CHEBI:49883"/>
        <note>4Fe-4S-S-AdoMet</note>
    </ligand>
</feature>
<feature type="binding site" evidence="1">
    <location>
        <begin position="159"/>
        <end position="160"/>
    </location>
    <ligand>
        <name>S-adenosyl-L-methionine</name>
        <dbReference type="ChEBI" id="CHEBI:59789"/>
    </ligand>
</feature>
<feature type="binding site" evidence="1">
    <location>
        <position position="191"/>
    </location>
    <ligand>
        <name>S-adenosyl-L-methionine</name>
        <dbReference type="ChEBI" id="CHEBI:59789"/>
    </ligand>
</feature>
<feature type="binding site" evidence="1">
    <location>
        <begin position="214"/>
        <end position="216"/>
    </location>
    <ligand>
        <name>S-adenosyl-L-methionine</name>
        <dbReference type="ChEBI" id="CHEBI:59789"/>
    </ligand>
</feature>
<feature type="binding site" evidence="1">
    <location>
        <position position="290"/>
    </location>
    <ligand>
        <name>S-adenosyl-L-methionine</name>
        <dbReference type="ChEBI" id="CHEBI:59789"/>
    </ligand>
</feature>
<feature type="disulfide bond" description="(transient)" evidence="1">
    <location>
        <begin position="102"/>
        <end position="333"/>
    </location>
</feature>
<sequence>MAASHALKPILELLPEELPGEGYRRAQIAHWLYAKGARDFSEMTDLPKALREALAREWRLSEFSLVQAFPSQDGSVKYLFTLLDGKKTEAVYMPYENRKTVCLSTMVGCPAGCTFCATGALGFGRNLTAAEILDQLLTIAYHQGLSPREIRNVVLMGMGEPLLNLRNVLKAVRIMLHKKALALSPRRVTLSTVGIPKGIYRLAEEDLGVRLALSLHAPDDETRRKIIPTAHRYPIAEIMEAVRHYHAKTKRRVTFEYTLLKGVNDHLWQARLLAKLLKGLSAHVNLIPFNPWEGAPVVGTPRAGVLAFAEELKRLGVPTSIRWSRGQDVGAACGQLALKVPRPLTLTPLPGGAGR</sequence>
<gene>
    <name evidence="1" type="primary">rlmN</name>
    <name type="ordered locus">TTHA1937</name>
</gene>
<protein>
    <recommendedName>
        <fullName evidence="1">Probable dual-specificity RNA methyltransferase RlmN</fullName>
        <ecNumber evidence="1">2.1.1.192</ecNumber>
    </recommendedName>
    <alternativeName>
        <fullName evidence="1">23S rRNA (adenine(2503)-C(2))-methyltransferase</fullName>
    </alternativeName>
    <alternativeName>
        <fullName evidence="1">23S rRNA m2A2503 methyltransferase</fullName>
    </alternativeName>
    <alternativeName>
        <fullName evidence="1">Ribosomal RNA large subunit methyltransferase N</fullName>
    </alternativeName>
    <alternativeName>
        <fullName evidence="1">tRNA (adenine(37)-C(2))-methyltransferase</fullName>
    </alternativeName>
    <alternativeName>
        <fullName evidence="1">tRNA m2A37 methyltransferase</fullName>
    </alternativeName>
</protein>
<accession>Q5SGZ3</accession>
<proteinExistence type="inferred from homology"/>